<keyword id="KW-1003">Cell membrane</keyword>
<keyword id="KW-0472">Membrane</keyword>
<keyword id="KW-0812">Transmembrane</keyword>
<keyword id="KW-1133">Transmembrane helix</keyword>
<proteinExistence type="inferred from homology"/>
<organism>
    <name type="scientific">Bacillus anthracis (strain A0248)</name>
    <dbReference type="NCBI Taxonomy" id="592021"/>
    <lineage>
        <taxon>Bacteria</taxon>
        <taxon>Bacillati</taxon>
        <taxon>Bacillota</taxon>
        <taxon>Bacilli</taxon>
        <taxon>Bacillales</taxon>
        <taxon>Bacillaceae</taxon>
        <taxon>Bacillus</taxon>
        <taxon>Bacillus cereus group</taxon>
    </lineage>
</organism>
<name>Y1237_BACAA</name>
<protein>
    <recommendedName>
        <fullName evidence="1">UPF0344 protein BAA_1237</fullName>
    </recommendedName>
</protein>
<gene>
    <name type="ordered locus">BAA_1237</name>
</gene>
<dbReference type="EMBL" id="CP001598">
    <property type="protein sequence ID" value="ACQ48482.1"/>
    <property type="molecule type" value="Genomic_DNA"/>
</dbReference>
<dbReference type="RefSeq" id="WP_000233490.1">
    <property type="nucleotide sequence ID" value="NC_012659.1"/>
</dbReference>
<dbReference type="KEGG" id="bai:BAA_1237"/>
<dbReference type="HOGENOM" id="CLU_146641_1_1_9"/>
<dbReference type="GO" id="GO:0005886">
    <property type="term" value="C:plasma membrane"/>
    <property type="evidence" value="ECO:0007669"/>
    <property type="project" value="UniProtKB-SubCell"/>
</dbReference>
<dbReference type="HAMAP" id="MF_01536">
    <property type="entry name" value="UPF0344"/>
    <property type="match status" value="1"/>
</dbReference>
<dbReference type="InterPro" id="IPR010899">
    <property type="entry name" value="UPF0344"/>
</dbReference>
<dbReference type="NCBIfam" id="NF010194">
    <property type="entry name" value="PRK13673.1-1"/>
    <property type="match status" value="1"/>
</dbReference>
<dbReference type="Pfam" id="PF07457">
    <property type="entry name" value="DUF1516"/>
    <property type="match status" value="1"/>
</dbReference>
<evidence type="ECO:0000255" key="1">
    <source>
        <dbReference type="HAMAP-Rule" id="MF_01536"/>
    </source>
</evidence>
<reference key="1">
    <citation type="submission" date="2009-04" db="EMBL/GenBank/DDBJ databases">
        <title>Genome sequence of Bacillus anthracis A0248.</title>
        <authorList>
            <person name="Dodson R.J."/>
            <person name="Munk A.C."/>
            <person name="Bruce D."/>
            <person name="Detter C."/>
            <person name="Tapia R."/>
            <person name="Sutton G."/>
            <person name="Sims D."/>
            <person name="Brettin T."/>
        </authorList>
    </citation>
    <scope>NUCLEOTIDE SEQUENCE [LARGE SCALE GENOMIC DNA]</scope>
    <source>
        <strain>A0248</strain>
    </source>
</reference>
<comment type="subcellular location">
    <subcellularLocation>
        <location evidence="1">Cell membrane</location>
        <topology evidence="1">Multi-pass membrane protein</topology>
    </subcellularLocation>
</comment>
<comment type="similarity">
    <text evidence="1">Belongs to the UPF0344 family.</text>
</comment>
<feature type="chain" id="PRO_1000185186" description="UPF0344 protein BAA_1237">
    <location>
        <begin position="1"/>
        <end position="121"/>
    </location>
</feature>
<feature type="transmembrane region" description="Helical" evidence="1">
    <location>
        <begin position="6"/>
        <end position="26"/>
    </location>
</feature>
<feature type="transmembrane region" description="Helical" evidence="1">
    <location>
        <begin position="38"/>
        <end position="58"/>
    </location>
</feature>
<feature type="transmembrane region" description="Helical" evidence="1">
    <location>
        <begin position="65"/>
        <end position="85"/>
    </location>
</feature>
<feature type="transmembrane region" description="Helical" evidence="1">
    <location>
        <begin position="92"/>
        <end position="112"/>
    </location>
</feature>
<sequence>MVHMHITAWALGLILFFVAYSLYSAGRKGKGVHMGLRLMYIIIIVTGFMLYMGIMKTATSNMHMWYGLKMIAGILVIGGMEMVLVKMSKNKATGAVWGLFIVALVAVFYLGLKLPIGWQVF</sequence>
<accession>C3P3K4</accession>